<accession>B3Q968</accession>
<organism>
    <name type="scientific">Rhodopseudomonas palustris (strain TIE-1)</name>
    <dbReference type="NCBI Taxonomy" id="395960"/>
    <lineage>
        <taxon>Bacteria</taxon>
        <taxon>Pseudomonadati</taxon>
        <taxon>Pseudomonadota</taxon>
        <taxon>Alphaproteobacteria</taxon>
        <taxon>Hyphomicrobiales</taxon>
        <taxon>Nitrobacteraceae</taxon>
        <taxon>Rhodopseudomonas</taxon>
    </lineage>
</organism>
<feature type="chain" id="PRO_1000129364" description="Ribonuclease PH">
    <location>
        <begin position="1"/>
        <end position="237"/>
    </location>
</feature>
<feature type="binding site" evidence="1">
    <location>
        <position position="86"/>
    </location>
    <ligand>
        <name>phosphate</name>
        <dbReference type="ChEBI" id="CHEBI:43474"/>
        <note>substrate</note>
    </ligand>
</feature>
<feature type="binding site" evidence="1">
    <location>
        <begin position="124"/>
        <end position="126"/>
    </location>
    <ligand>
        <name>phosphate</name>
        <dbReference type="ChEBI" id="CHEBI:43474"/>
        <note>substrate</note>
    </ligand>
</feature>
<proteinExistence type="inferred from homology"/>
<gene>
    <name evidence="1" type="primary">rph</name>
    <name type="ordered locus">Rpal_0332</name>
</gene>
<name>RNPH_RHOPT</name>
<protein>
    <recommendedName>
        <fullName evidence="1">Ribonuclease PH</fullName>
        <shortName evidence="1">RNase PH</shortName>
        <ecNumber evidence="1">2.7.7.56</ecNumber>
    </recommendedName>
    <alternativeName>
        <fullName evidence="1">tRNA nucleotidyltransferase</fullName>
    </alternativeName>
</protein>
<keyword id="KW-0548">Nucleotidyltransferase</keyword>
<keyword id="KW-0694">RNA-binding</keyword>
<keyword id="KW-0698">rRNA processing</keyword>
<keyword id="KW-0808">Transferase</keyword>
<keyword id="KW-0819">tRNA processing</keyword>
<keyword id="KW-0820">tRNA-binding</keyword>
<comment type="function">
    <text evidence="1">Phosphorolytic 3'-5' exoribonuclease that plays an important role in tRNA 3'-end maturation. Removes nucleotide residues following the 3'-CCA terminus of tRNAs; can also add nucleotides to the ends of RNA molecules by using nucleoside diphosphates as substrates, but this may not be physiologically important. Probably plays a role in initiation of 16S rRNA degradation (leading to ribosome degradation) during starvation.</text>
</comment>
<comment type="catalytic activity">
    <reaction evidence="1">
        <text>tRNA(n+1) + phosphate = tRNA(n) + a ribonucleoside 5'-diphosphate</text>
        <dbReference type="Rhea" id="RHEA:10628"/>
        <dbReference type="Rhea" id="RHEA-COMP:17343"/>
        <dbReference type="Rhea" id="RHEA-COMP:17344"/>
        <dbReference type="ChEBI" id="CHEBI:43474"/>
        <dbReference type="ChEBI" id="CHEBI:57930"/>
        <dbReference type="ChEBI" id="CHEBI:173114"/>
        <dbReference type="EC" id="2.7.7.56"/>
    </reaction>
</comment>
<comment type="subunit">
    <text evidence="1">Homohexameric ring arranged as a trimer of dimers.</text>
</comment>
<comment type="similarity">
    <text evidence="1">Belongs to the RNase PH family.</text>
</comment>
<reference key="1">
    <citation type="submission" date="2008-05" db="EMBL/GenBank/DDBJ databases">
        <title>Complete sequence of Rhodopseudomonas palustris TIE-1.</title>
        <authorList>
            <consortium name="US DOE Joint Genome Institute"/>
            <person name="Lucas S."/>
            <person name="Copeland A."/>
            <person name="Lapidus A."/>
            <person name="Glavina del Rio T."/>
            <person name="Dalin E."/>
            <person name="Tice H."/>
            <person name="Pitluck S."/>
            <person name="Chain P."/>
            <person name="Malfatti S."/>
            <person name="Shin M."/>
            <person name="Vergez L."/>
            <person name="Lang D."/>
            <person name="Schmutz J."/>
            <person name="Larimer F."/>
            <person name="Land M."/>
            <person name="Hauser L."/>
            <person name="Kyrpides N."/>
            <person name="Mikhailova N."/>
            <person name="Emerson D."/>
            <person name="Newman D.K."/>
            <person name="Roden E."/>
            <person name="Richardson P."/>
        </authorList>
    </citation>
    <scope>NUCLEOTIDE SEQUENCE [LARGE SCALE GENOMIC DNA]</scope>
    <source>
        <strain>TIE-1</strain>
    </source>
</reference>
<sequence length="237" mass="25980">MRPSRRAPDELRAVSLERGVVKYAEGSCLVKFGDTHVLVTATLEERLPPWLKGQGRGWVTAEYGMLPRATLERTRREASAGKQNGRTVEIQRLIGRSLRTIVDLEALGERQITVDCDVLQADGGTRTASITGAWVALADCLNWMKARNMIKGQVLRDNVAAISCGIYNGTPVLDLDYAEDSEAETDANFVMTGDGRLVEVQGTAERTPFSQDEFLQLMALAQKGVARLVDLQKMAVG</sequence>
<dbReference type="EC" id="2.7.7.56" evidence="1"/>
<dbReference type="EMBL" id="CP001096">
    <property type="protein sequence ID" value="ACE98892.1"/>
    <property type="molecule type" value="Genomic_DNA"/>
</dbReference>
<dbReference type="RefSeq" id="WP_011155897.1">
    <property type="nucleotide sequence ID" value="NC_011004.1"/>
</dbReference>
<dbReference type="SMR" id="B3Q968"/>
<dbReference type="GeneID" id="66891340"/>
<dbReference type="KEGG" id="rpt:Rpal_0332"/>
<dbReference type="HOGENOM" id="CLU_050858_0_0_5"/>
<dbReference type="OrthoDB" id="9802265at2"/>
<dbReference type="Proteomes" id="UP000001725">
    <property type="component" value="Chromosome"/>
</dbReference>
<dbReference type="GO" id="GO:0000175">
    <property type="term" value="F:3'-5'-RNA exonuclease activity"/>
    <property type="evidence" value="ECO:0007669"/>
    <property type="project" value="UniProtKB-UniRule"/>
</dbReference>
<dbReference type="GO" id="GO:0000049">
    <property type="term" value="F:tRNA binding"/>
    <property type="evidence" value="ECO:0007669"/>
    <property type="project" value="UniProtKB-UniRule"/>
</dbReference>
<dbReference type="GO" id="GO:0009022">
    <property type="term" value="F:tRNA nucleotidyltransferase activity"/>
    <property type="evidence" value="ECO:0007669"/>
    <property type="project" value="UniProtKB-UniRule"/>
</dbReference>
<dbReference type="GO" id="GO:0016075">
    <property type="term" value="P:rRNA catabolic process"/>
    <property type="evidence" value="ECO:0007669"/>
    <property type="project" value="UniProtKB-UniRule"/>
</dbReference>
<dbReference type="GO" id="GO:0006364">
    <property type="term" value="P:rRNA processing"/>
    <property type="evidence" value="ECO:0007669"/>
    <property type="project" value="UniProtKB-KW"/>
</dbReference>
<dbReference type="GO" id="GO:0008033">
    <property type="term" value="P:tRNA processing"/>
    <property type="evidence" value="ECO:0007669"/>
    <property type="project" value="UniProtKB-UniRule"/>
</dbReference>
<dbReference type="CDD" id="cd11362">
    <property type="entry name" value="RNase_PH_bact"/>
    <property type="match status" value="1"/>
</dbReference>
<dbReference type="FunFam" id="3.30.230.70:FF:000003">
    <property type="entry name" value="Ribonuclease PH"/>
    <property type="match status" value="1"/>
</dbReference>
<dbReference type="Gene3D" id="3.30.230.70">
    <property type="entry name" value="GHMP Kinase, N-terminal domain"/>
    <property type="match status" value="1"/>
</dbReference>
<dbReference type="HAMAP" id="MF_00564">
    <property type="entry name" value="RNase_PH"/>
    <property type="match status" value="1"/>
</dbReference>
<dbReference type="InterPro" id="IPR001247">
    <property type="entry name" value="ExoRNase_PH_dom1"/>
</dbReference>
<dbReference type="InterPro" id="IPR015847">
    <property type="entry name" value="ExoRNase_PH_dom2"/>
</dbReference>
<dbReference type="InterPro" id="IPR036345">
    <property type="entry name" value="ExoRNase_PH_dom2_sf"/>
</dbReference>
<dbReference type="InterPro" id="IPR027408">
    <property type="entry name" value="PNPase/RNase_PH_dom_sf"/>
</dbReference>
<dbReference type="InterPro" id="IPR020568">
    <property type="entry name" value="Ribosomal_Su5_D2-typ_SF"/>
</dbReference>
<dbReference type="InterPro" id="IPR050080">
    <property type="entry name" value="RNase_PH"/>
</dbReference>
<dbReference type="InterPro" id="IPR002381">
    <property type="entry name" value="RNase_PH_bac-type"/>
</dbReference>
<dbReference type="InterPro" id="IPR018336">
    <property type="entry name" value="RNase_PH_CS"/>
</dbReference>
<dbReference type="NCBIfam" id="TIGR01966">
    <property type="entry name" value="RNasePH"/>
    <property type="match status" value="1"/>
</dbReference>
<dbReference type="PANTHER" id="PTHR11953">
    <property type="entry name" value="EXOSOME COMPLEX COMPONENT"/>
    <property type="match status" value="1"/>
</dbReference>
<dbReference type="PANTHER" id="PTHR11953:SF0">
    <property type="entry name" value="EXOSOME COMPLEX COMPONENT RRP41"/>
    <property type="match status" value="1"/>
</dbReference>
<dbReference type="Pfam" id="PF01138">
    <property type="entry name" value="RNase_PH"/>
    <property type="match status" value="1"/>
</dbReference>
<dbReference type="Pfam" id="PF03725">
    <property type="entry name" value="RNase_PH_C"/>
    <property type="match status" value="1"/>
</dbReference>
<dbReference type="SUPFAM" id="SSF55666">
    <property type="entry name" value="Ribonuclease PH domain 2-like"/>
    <property type="match status" value="1"/>
</dbReference>
<dbReference type="SUPFAM" id="SSF54211">
    <property type="entry name" value="Ribosomal protein S5 domain 2-like"/>
    <property type="match status" value="1"/>
</dbReference>
<dbReference type="PROSITE" id="PS01277">
    <property type="entry name" value="RIBONUCLEASE_PH"/>
    <property type="match status" value="1"/>
</dbReference>
<evidence type="ECO:0000255" key="1">
    <source>
        <dbReference type="HAMAP-Rule" id="MF_00564"/>
    </source>
</evidence>